<reference key="1">
    <citation type="journal article" date="2005" name="Genome Res.">
        <title>Comparative genome sequencing of Drosophila pseudoobscura: chromosomal, gene, and cis-element evolution.</title>
        <authorList>
            <person name="Richards S."/>
            <person name="Liu Y."/>
            <person name="Bettencourt B.R."/>
            <person name="Hradecky P."/>
            <person name="Letovsky S."/>
            <person name="Nielsen R."/>
            <person name="Thornton K."/>
            <person name="Hubisz M.J."/>
            <person name="Chen R."/>
            <person name="Meisel R.P."/>
            <person name="Couronne O."/>
            <person name="Hua S."/>
            <person name="Smith M.A."/>
            <person name="Zhang P."/>
            <person name="Liu J."/>
            <person name="Bussemaker H.J."/>
            <person name="van Batenburg M.F."/>
            <person name="Howells S.L."/>
            <person name="Scherer S.E."/>
            <person name="Sodergren E."/>
            <person name="Matthews B.B."/>
            <person name="Crosby M.A."/>
            <person name="Schroeder A.J."/>
            <person name="Ortiz-Barrientos D."/>
            <person name="Rives C.M."/>
            <person name="Metzker M.L."/>
            <person name="Muzny D.M."/>
            <person name="Scott G."/>
            <person name="Steffen D."/>
            <person name="Wheeler D.A."/>
            <person name="Worley K.C."/>
            <person name="Havlak P."/>
            <person name="Durbin K.J."/>
            <person name="Egan A."/>
            <person name="Gill R."/>
            <person name="Hume J."/>
            <person name="Morgan M.B."/>
            <person name="Miner G."/>
            <person name="Hamilton C."/>
            <person name="Huang Y."/>
            <person name="Waldron L."/>
            <person name="Verduzco D."/>
            <person name="Clerc-Blankenburg K.P."/>
            <person name="Dubchak I."/>
            <person name="Noor M.A.F."/>
            <person name="Anderson W."/>
            <person name="White K.P."/>
            <person name="Clark A.G."/>
            <person name="Schaeffer S.W."/>
            <person name="Gelbart W.M."/>
            <person name="Weinstock G.M."/>
            <person name="Gibbs R.A."/>
        </authorList>
    </citation>
    <scope>NUCLEOTIDE SEQUENCE [LARGE SCALE GENOMIC DNA]</scope>
    <source>
        <strain>MV2-25 / Tucson 14011-0121.94</strain>
    </source>
</reference>
<feature type="chain" id="PRO_0000369207" description="Adenylyltransferase and sulfurtransferase MOCS3-1">
    <location>
        <begin position="1"/>
        <end position="451"/>
    </location>
</feature>
<feature type="domain" description="Rhodanese" evidence="2">
    <location>
        <begin position="353"/>
        <end position="449"/>
    </location>
</feature>
<feature type="region of interest" description="Disordered" evidence="3">
    <location>
        <begin position="42"/>
        <end position="62"/>
    </location>
</feature>
<feature type="compositionally biased region" description="Acidic residues" evidence="3">
    <location>
        <begin position="43"/>
        <end position="52"/>
    </location>
</feature>
<feature type="active site" description="Glycyl thioester intermediate; for adenylyltransferase activity" evidence="2">
    <location>
        <position position="246"/>
    </location>
</feature>
<feature type="active site" description="Cysteine persulfide intermediate; for sulfurtransferase activity" evidence="2">
    <location>
        <position position="408"/>
    </location>
</feature>
<feature type="binding site" evidence="2">
    <location>
        <position position="99"/>
    </location>
    <ligand>
        <name>ATP</name>
        <dbReference type="ChEBI" id="CHEBI:30616"/>
    </ligand>
</feature>
<feature type="binding site" evidence="2">
    <location>
        <position position="120"/>
    </location>
    <ligand>
        <name>ATP</name>
        <dbReference type="ChEBI" id="CHEBI:30616"/>
    </ligand>
</feature>
<feature type="binding site" evidence="2">
    <location>
        <begin position="127"/>
        <end position="131"/>
    </location>
    <ligand>
        <name>ATP</name>
        <dbReference type="ChEBI" id="CHEBI:30616"/>
    </ligand>
</feature>
<feature type="binding site" evidence="2">
    <location>
        <position position="144"/>
    </location>
    <ligand>
        <name>ATP</name>
        <dbReference type="ChEBI" id="CHEBI:30616"/>
    </ligand>
</feature>
<feature type="binding site" evidence="2">
    <location>
        <begin position="188"/>
        <end position="189"/>
    </location>
    <ligand>
        <name>ATP</name>
        <dbReference type="ChEBI" id="CHEBI:30616"/>
    </ligand>
</feature>
<feature type="binding site" evidence="2">
    <location>
        <position position="229"/>
    </location>
    <ligand>
        <name>Zn(2+)</name>
        <dbReference type="ChEBI" id="CHEBI:29105"/>
    </ligand>
</feature>
<feature type="binding site" evidence="2">
    <location>
        <position position="232"/>
    </location>
    <ligand>
        <name>Zn(2+)</name>
        <dbReference type="ChEBI" id="CHEBI:29105"/>
    </ligand>
</feature>
<feature type="binding site" evidence="2">
    <location>
        <position position="304"/>
    </location>
    <ligand>
        <name>Zn(2+)</name>
        <dbReference type="ChEBI" id="CHEBI:29105"/>
    </ligand>
</feature>
<feature type="binding site" evidence="2">
    <location>
        <position position="307"/>
    </location>
    <ligand>
        <name>Zn(2+)</name>
        <dbReference type="ChEBI" id="CHEBI:29105"/>
    </ligand>
</feature>
<feature type="modified residue" description="Phosphothreonine" evidence="1">
    <location>
        <position position="60"/>
    </location>
</feature>
<protein>
    <recommendedName>
        <fullName evidence="2">Adenylyltransferase and sulfurtransferase MOCS3-1</fullName>
    </recommendedName>
    <alternativeName>
        <fullName evidence="2">Molybdenum cofactor synthesis protein 3-1</fullName>
    </alternativeName>
    <domain>
        <recommendedName>
            <fullName evidence="2">Molybdopterin-synthase adenylyltransferase 1</fullName>
            <ecNumber evidence="2">2.7.7.80</ecNumber>
        </recommendedName>
        <alternativeName>
            <fullName evidence="2">Adenylyltransferase MOCS3-1</fullName>
        </alternativeName>
        <alternativeName>
            <fullName evidence="2">Sulfur carrier protein MOCS2A adenylyltransferase 1</fullName>
        </alternativeName>
    </domain>
    <domain>
        <recommendedName>
            <fullName evidence="2">Molybdopterin-synthase sulfurtransferase 1</fullName>
            <ecNumber evidence="2">2.8.1.11</ecNumber>
        </recommendedName>
        <alternativeName>
            <fullName evidence="2">Sulfur carrier protein MOCS2A sulfurtransferase 1</fullName>
        </alternativeName>
        <alternativeName>
            <fullName evidence="2">Sulfurtransferase MOCS3-1</fullName>
        </alternativeName>
    </domain>
</protein>
<keyword id="KW-0067">ATP-binding</keyword>
<keyword id="KW-0963">Cytoplasm</keyword>
<keyword id="KW-0479">Metal-binding</keyword>
<keyword id="KW-0501">Molybdenum cofactor biosynthesis</keyword>
<keyword id="KW-0511">Multifunctional enzyme</keyword>
<keyword id="KW-0547">Nucleotide-binding</keyword>
<keyword id="KW-0597">Phosphoprotein</keyword>
<keyword id="KW-1185">Reference proteome</keyword>
<keyword id="KW-0808">Transferase</keyword>
<keyword id="KW-0819">tRNA processing</keyword>
<keyword id="KW-0862">Zinc</keyword>
<evidence type="ECO:0000250" key="1"/>
<evidence type="ECO:0000255" key="2">
    <source>
        <dbReference type="HAMAP-Rule" id="MF_03049"/>
    </source>
</evidence>
<evidence type="ECO:0000256" key="3">
    <source>
        <dbReference type="SAM" id="MobiDB-lite"/>
    </source>
</evidence>
<accession>B5DS72</accession>
<comment type="function">
    <text evidence="2">Plays a central role in 2-thiolation of mcm(5)S(2)U at tRNA wobble positions of cytosolic tRNA(Lys), tRNA(Glu) and tRNA(Gln). Also essential during biosynthesis of the molybdenum cofactor. Acts by mediating the C-terminal thiocarboxylation of sulfur carriers URM1 and MOCS2A. Its N-terminus first activates URM1 and MOCS2A as acyl-adenylates (-COAMP), then the persulfide sulfur on the catalytic cysteine is transferred to URM1 and MOCS2A to form thiocarboxylation (-COSH) of their C-terminus. The reaction probably involves hydrogen sulfide that is generated from the persulfide intermediate and that acts as a nucleophile towards URM1 and MOCS2A. Subsequently, a transient disulfide bond is formed. Does not use thiosulfate as sulfur donor; NFS1 probably acting as a sulfur donor for thiocarboxylation reactions.</text>
</comment>
<comment type="catalytic activity">
    <reaction evidence="2">
        <text>[molybdopterin-synthase sulfur-carrier protein]-C-terminal Gly-Gly + ATP + H(+) = [molybdopterin-synthase sulfur-carrier protein]-C-terminal Gly-Gly-AMP + diphosphate</text>
        <dbReference type="Rhea" id="RHEA:43616"/>
        <dbReference type="Rhea" id="RHEA-COMP:12159"/>
        <dbReference type="Rhea" id="RHEA-COMP:12202"/>
        <dbReference type="ChEBI" id="CHEBI:15378"/>
        <dbReference type="ChEBI" id="CHEBI:30616"/>
        <dbReference type="ChEBI" id="CHEBI:33019"/>
        <dbReference type="ChEBI" id="CHEBI:90618"/>
        <dbReference type="ChEBI" id="CHEBI:90778"/>
        <dbReference type="EC" id="2.7.7.80"/>
    </reaction>
</comment>
<comment type="catalytic activity">
    <reaction evidence="2">
        <text>[molybdopterin-synthase sulfur-carrier protein]-C-terminal Gly-Gly-AMP + S-sulfanyl-L-cysteinyl-[cysteine desulfurase] + AH2 = [molybdopterin-synthase sulfur-carrier protein]-C-terminal-Gly-aminoethanethioate + L-cysteinyl-[cysteine desulfurase] + A + AMP + 2 H(+)</text>
        <dbReference type="Rhea" id="RHEA:48612"/>
        <dbReference type="Rhea" id="RHEA-COMP:12157"/>
        <dbReference type="Rhea" id="RHEA-COMP:12158"/>
        <dbReference type="Rhea" id="RHEA-COMP:12159"/>
        <dbReference type="Rhea" id="RHEA-COMP:19907"/>
        <dbReference type="ChEBI" id="CHEBI:13193"/>
        <dbReference type="ChEBI" id="CHEBI:15378"/>
        <dbReference type="ChEBI" id="CHEBI:17499"/>
        <dbReference type="ChEBI" id="CHEBI:29950"/>
        <dbReference type="ChEBI" id="CHEBI:61963"/>
        <dbReference type="ChEBI" id="CHEBI:90618"/>
        <dbReference type="ChEBI" id="CHEBI:232372"/>
        <dbReference type="ChEBI" id="CHEBI:456215"/>
        <dbReference type="EC" id="2.8.1.11"/>
    </reaction>
</comment>
<comment type="cofactor">
    <cofactor evidence="2">
        <name>Zn(2+)</name>
        <dbReference type="ChEBI" id="CHEBI:29105"/>
    </cofactor>
    <text evidence="2">Binds 1 zinc ion per subunit.</text>
</comment>
<comment type="pathway">
    <text evidence="2">tRNA modification; 5-methoxycarbonylmethyl-2-thiouridine-tRNA biosynthesis.</text>
</comment>
<comment type="pathway">
    <text evidence="2">Cofactor biosynthesis; molybdopterin biosynthesis.</text>
</comment>
<comment type="subcellular location">
    <subcellularLocation>
        <location evidence="2">Cytoplasm</location>
    </subcellularLocation>
</comment>
<comment type="similarity">
    <text evidence="2">In the N-terminal section; belongs to the HesA/MoeB/ThiF family. UBA4 subfamily.</text>
</comment>
<organism>
    <name type="scientific">Drosophila pseudoobscura pseudoobscura</name>
    <name type="common">Fruit fly</name>
    <dbReference type="NCBI Taxonomy" id="46245"/>
    <lineage>
        <taxon>Eukaryota</taxon>
        <taxon>Metazoa</taxon>
        <taxon>Ecdysozoa</taxon>
        <taxon>Arthropoda</taxon>
        <taxon>Hexapoda</taxon>
        <taxon>Insecta</taxon>
        <taxon>Pterygota</taxon>
        <taxon>Neoptera</taxon>
        <taxon>Endopterygota</taxon>
        <taxon>Diptera</taxon>
        <taxon>Brachycera</taxon>
        <taxon>Muscomorpha</taxon>
        <taxon>Ephydroidea</taxon>
        <taxon>Drosophilidae</taxon>
        <taxon>Drosophila</taxon>
        <taxon>Sophophora</taxon>
    </lineage>
</organism>
<dbReference type="EC" id="2.7.7.80" evidence="2"/>
<dbReference type="EC" id="2.8.1.11" evidence="2"/>
<dbReference type="EMBL" id="CH475461">
    <property type="protein sequence ID" value="EDY71203.1"/>
    <property type="molecule type" value="Genomic_DNA"/>
</dbReference>
<dbReference type="RefSeq" id="XP_002135737.1">
    <property type="nucleotide sequence ID" value="XM_002135701.2"/>
</dbReference>
<dbReference type="SMR" id="B5DS72"/>
<dbReference type="FunCoup" id="B5DS72">
    <property type="interactions" value="429"/>
</dbReference>
<dbReference type="STRING" id="46245.B5DS72"/>
<dbReference type="EnsemblMetazoa" id="FBtr0279919">
    <property type="protein sequence ID" value="FBpp0278357"/>
    <property type="gene ID" value="FBgn0246349"/>
</dbReference>
<dbReference type="eggNOG" id="KOG2017">
    <property type="taxonomic scope" value="Eukaryota"/>
</dbReference>
<dbReference type="HOGENOM" id="CLU_013325_1_2_1"/>
<dbReference type="InParanoid" id="B5DS72"/>
<dbReference type="OMA" id="WATEVDQ"/>
<dbReference type="UniPathway" id="UPA00344"/>
<dbReference type="UniPathway" id="UPA00988"/>
<dbReference type="Proteomes" id="UP000001819">
    <property type="component" value="Unplaced"/>
</dbReference>
<dbReference type="Bgee" id="FBgn0246349">
    <property type="expression patterns" value="Expressed in female reproductive system and 2 other cell types or tissues"/>
</dbReference>
<dbReference type="GO" id="GO:0005829">
    <property type="term" value="C:cytosol"/>
    <property type="evidence" value="ECO:0000250"/>
    <property type="project" value="UniProtKB"/>
</dbReference>
<dbReference type="GO" id="GO:0005524">
    <property type="term" value="F:ATP binding"/>
    <property type="evidence" value="ECO:0007669"/>
    <property type="project" value="UniProtKB-KW"/>
</dbReference>
<dbReference type="GO" id="GO:0046872">
    <property type="term" value="F:metal ion binding"/>
    <property type="evidence" value="ECO:0007669"/>
    <property type="project" value="UniProtKB-KW"/>
</dbReference>
<dbReference type="GO" id="GO:0061605">
    <property type="term" value="F:molybdopterin-synthase adenylyltransferase activity"/>
    <property type="evidence" value="ECO:0007669"/>
    <property type="project" value="UniProtKB-EC"/>
</dbReference>
<dbReference type="GO" id="GO:0061604">
    <property type="term" value="F:molybdopterin-synthase sulfurtransferase activity"/>
    <property type="evidence" value="ECO:0000250"/>
    <property type="project" value="UniProtKB"/>
</dbReference>
<dbReference type="GO" id="GO:0004792">
    <property type="term" value="F:thiosulfate-cyanide sulfurtransferase activity"/>
    <property type="evidence" value="ECO:0007669"/>
    <property type="project" value="TreeGrafter"/>
</dbReference>
<dbReference type="GO" id="GO:0042292">
    <property type="term" value="F:URM1 activating enzyme activity"/>
    <property type="evidence" value="ECO:0007669"/>
    <property type="project" value="TreeGrafter"/>
</dbReference>
<dbReference type="GO" id="GO:0006777">
    <property type="term" value="P:Mo-molybdopterin cofactor biosynthetic process"/>
    <property type="evidence" value="ECO:0000250"/>
    <property type="project" value="UniProtKB"/>
</dbReference>
<dbReference type="GO" id="GO:0032447">
    <property type="term" value="P:protein urmylation"/>
    <property type="evidence" value="ECO:0007669"/>
    <property type="project" value="TreeGrafter"/>
</dbReference>
<dbReference type="GO" id="GO:0002143">
    <property type="term" value="P:tRNA wobble position uridine thiolation"/>
    <property type="evidence" value="ECO:0007669"/>
    <property type="project" value="InterPro"/>
</dbReference>
<dbReference type="CDD" id="cd00757">
    <property type="entry name" value="ThiF_MoeB_HesA_family"/>
    <property type="match status" value="1"/>
</dbReference>
<dbReference type="FunFam" id="3.40.250.10:FF:000014">
    <property type="entry name" value="Adenylyltransferase and sulfurtransferase MOCS3"/>
    <property type="match status" value="1"/>
</dbReference>
<dbReference type="FunFam" id="3.40.50.720:FF:000206">
    <property type="entry name" value="Adenylyltransferase and sulfurtransferase MOCS3"/>
    <property type="match status" value="1"/>
</dbReference>
<dbReference type="Gene3D" id="3.40.50.720">
    <property type="entry name" value="NAD(P)-binding Rossmann-like Domain"/>
    <property type="match status" value="1"/>
</dbReference>
<dbReference type="Gene3D" id="3.40.250.10">
    <property type="entry name" value="Rhodanese-like domain"/>
    <property type="match status" value="1"/>
</dbReference>
<dbReference type="HAMAP" id="MF_03049">
    <property type="entry name" value="MOCS3_Uba4"/>
    <property type="match status" value="1"/>
</dbReference>
<dbReference type="InterPro" id="IPR028885">
    <property type="entry name" value="MOCS3/Uba4"/>
</dbReference>
<dbReference type="InterPro" id="IPR001763">
    <property type="entry name" value="Rhodanese-like_dom"/>
</dbReference>
<dbReference type="InterPro" id="IPR036873">
    <property type="entry name" value="Rhodanese-like_dom_sf"/>
</dbReference>
<dbReference type="InterPro" id="IPR045886">
    <property type="entry name" value="ThiF/MoeB/HesA"/>
</dbReference>
<dbReference type="InterPro" id="IPR000594">
    <property type="entry name" value="ThiF_NAD_FAD-bd"/>
</dbReference>
<dbReference type="InterPro" id="IPR035985">
    <property type="entry name" value="Ubiquitin-activating_enz"/>
</dbReference>
<dbReference type="NCBIfam" id="NF004281">
    <property type="entry name" value="PRK05690.1"/>
    <property type="match status" value="1"/>
</dbReference>
<dbReference type="PANTHER" id="PTHR10953:SF102">
    <property type="entry name" value="ADENYLYLTRANSFERASE AND SULFURTRANSFERASE MOCS3"/>
    <property type="match status" value="1"/>
</dbReference>
<dbReference type="PANTHER" id="PTHR10953">
    <property type="entry name" value="UBIQUITIN-ACTIVATING ENZYME E1"/>
    <property type="match status" value="1"/>
</dbReference>
<dbReference type="Pfam" id="PF00581">
    <property type="entry name" value="Rhodanese"/>
    <property type="match status" value="1"/>
</dbReference>
<dbReference type="Pfam" id="PF00899">
    <property type="entry name" value="ThiF"/>
    <property type="match status" value="1"/>
</dbReference>
<dbReference type="SMART" id="SM00450">
    <property type="entry name" value="RHOD"/>
    <property type="match status" value="1"/>
</dbReference>
<dbReference type="SUPFAM" id="SSF69572">
    <property type="entry name" value="Activating enzymes of the ubiquitin-like proteins"/>
    <property type="match status" value="1"/>
</dbReference>
<dbReference type="PROSITE" id="PS50206">
    <property type="entry name" value="RHODANESE_3"/>
    <property type="match status" value="1"/>
</dbReference>
<gene>
    <name type="ORF">GA24966</name>
</gene>
<proteinExistence type="inferred from homology"/>
<name>MOC31_DROPS</name>
<sequence length="451" mass="50100">MIDSEALESERVKLKRDIADLRANLNRKEQCLRELEAAIAAGEDSDEAEESSNDMPTPQTKLTNDDIARYSRQLILQDFGVQGQLKLKNSSVLIVGMGGLGCPAAQYLVAAGCGHLGLIDYDEVERSNLHRQILHSEHRCGMSKAESARIALLELNSHCQIRCHSRLINSMNAMHIIRPYDVVLDCSDNVATRYLLNDACVMLRKPLVSGSALKMDGQLTVYGYGQGPCYRCIYPVPPPPEAVTNCGDGGVLGAVTGIIGAMQALEAIKLIIGLGDVMSGRLLIFDGSSFMFRNIRIRTKRPNCHVCSAQPLITELIDYEMFCGMHATDKDNPLDLLEPDQRLEVKEYHQKLQSQPHLLLDVRPPAEFEICQLPRSINVPLSEILDDSYLKRFAKQLEDKELPIVLLCRRGNDSQIAVQHITNRFPAHSIRDLVGGLHAWTGSVDATFPIY</sequence>